<protein>
    <recommendedName>
        <fullName evidence="5">Citrate/sodium symporter</fullName>
    </recommendedName>
    <alternativeName>
        <fullName evidence="4">Citrate carrier</fullName>
    </alternativeName>
    <alternativeName>
        <fullName evidence="5">Citrate transporter CitS</fullName>
    </alternativeName>
</protein>
<organism>
    <name type="scientific">Salmonella pullorum</name>
    <dbReference type="NCBI Taxonomy" id="605"/>
    <lineage>
        <taxon>Bacteria</taxon>
        <taxon>Pseudomonadati</taxon>
        <taxon>Pseudomonadota</taxon>
        <taxon>Gammaproteobacteria</taxon>
        <taxon>Enterobacterales</taxon>
        <taxon>Enterobacteriaceae</taxon>
        <taxon>Salmonella</taxon>
    </lineage>
</organism>
<proteinExistence type="inferred from homology"/>
<name>CITN_SALPU</name>
<evidence type="ECO:0000250" key="1">
    <source>
        <dbReference type="UniProtKB" id="P31602"/>
    </source>
</evidence>
<evidence type="ECO:0000255" key="2"/>
<evidence type="ECO:0000269" key="3">
    <source>
    </source>
</evidence>
<evidence type="ECO:0000303" key="4">
    <source>
    </source>
</evidence>
<evidence type="ECO:0000305" key="5"/>
<comment type="function">
    <text evidence="3">Secondary active transporter that catalyzes the uptake of citrate across the membrane with the concomitant uptake of sodium (PubMed:1374406). Is specific for citrate (PubMed:1374406).</text>
</comment>
<comment type="catalytic activity">
    <reaction evidence="1">
        <text>citrate(out) + 2 Na(+)(out) = citrate(in) + 2 Na(+)(in)</text>
        <dbReference type="Rhea" id="RHEA:79471"/>
        <dbReference type="ChEBI" id="CHEBI:16947"/>
        <dbReference type="ChEBI" id="CHEBI:29101"/>
    </reaction>
    <physiologicalReaction direction="left-to-right" evidence="1">
        <dbReference type="Rhea" id="RHEA:79472"/>
    </physiologicalReaction>
</comment>
<comment type="subunit">
    <text evidence="1">Homodimer.</text>
</comment>
<comment type="subcellular location">
    <subcellularLocation>
        <location evidence="1">Cell inner membrane</location>
        <topology evidence="1">Multi-pass membrane protein</topology>
    </subcellularLocation>
</comment>
<comment type="similarity">
    <text evidence="5">Belongs to the 2-hydroxycarboxylate transporter (2-HCT) (TC 2.A.24) family.</text>
</comment>
<reference key="1">
    <citation type="journal article" date="1992" name="J. Biol. Chem.">
        <title>Cloning and nucleotide sequence of the gene (citC) encoding a citrate carrier from several Salmonella serovars.</title>
        <authorList>
            <person name="Ishiguro N."/>
            <person name="Izawa H."/>
            <person name="Shinagawa M."/>
            <person name="Shimamoto T."/>
            <person name="Tsuchiya T."/>
        </authorList>
    </citation>
    <scope>NUCLEOTIDE SEQUENCE [GENOMIC DNA]</scope>
    <scope>FUNCTION</scope>
    <source>
        <strain>1037</strain>
    </source>
</reference>
<keyword id="KW-0997">Cell inner membrane</keyword>
<keyword id="KW-1003">Cell membrane</keyword>
<keyword id="KW-0163">Citrate utilization</keyword>
<keyword id="KW-0406">Ion transport</keyword>
<keyword id="KW-0472">Membrane</keyword>
<keyword id="KW-0479">Metal-binding</keyword>
<keyword id="KW-0915">Sodium</keyword>
<keyword id="KW-0739">Sodium transport</keyword>
<keyword id="KW-0769">Symport</keyword>
<keyword id="KW-0812">Transmembrane</keyword>
<keyword id="KW-1133">Transmembrane helix</keyword>
<keyword id="KW-0813">Transport</keyword>
<dbReference type="EMBL" id="D10257">
    <property type="protein sequence ID" value="BAA01099.1"/>
    <property type="molecule type" value="Genomic_DNA"/>
</dbReference>
<dbReference type="PIR" id="A42661">
    <property type="entry name" value="A42661"/>
</dbReference>
<dbReference type="RefSeq" id="WP_000183602.1">
    <property type="nucleotide sequence ID" value="NZ_LHTF01000007.1"/>
</dbReference>
<dbReference type="SMR" id="P0A2G0"/>
<dbReference type="PATRIC" id="fig|605.10.peg.4752"/>
<dbReference type="GO" id="GO:0005886">
    <property type="term" value="C:plasma membrane"/>
    <property type="evidence" value="ECO:0007669"/>
    <property type="project" value="UniProtKB-SubCell"/>
</dbReference>
<dbReference type="GO" id="GO:0046872">
    <property type="term" value="F:metal ion binding"/>
    <property type="evidence" value="ECO:0007669"/>
    <property type="project" value="UniProtKB-KW"/>
</dbReference>
<dbReference type="GO" id="GO:0008514">
    <property type="term" value="F:organic anion transmembrane transporter activity"/>
    <property type="evidence" value="ECO:0007669"/>
    <property type="project" value="InterPro"/>
</dbReference>
<dbReference type="GO" id="GO:0015293">
    <property type="term" value="F:symporter activity"/>
    <property type="evidence" value="ECO:0007669"/>
    <property type="project" value="UniProtKB-KW"/>
</dbReference>
<dbReference type="GO" id="GO:0006101">
    <property type="term" value="P:citrate metabolic process"/>
    <property type="evidence" value="ECO:0007669"/>
    <property type="project" value="UniProtKB-KW"/>
</dbReference>
<dbReference type="GO" id="GO:0006814">
    <property type="term" value="P:sodium ion transport"/>
    <property type="evidence" value="ECO:0007669"/>
    <property type="project" value="UniProtKB-KW"/>
</dbReference>
<dbReference type="InterPro" id="IPR018025">
    <property type="entry name" value="2-OHcarbox_trans_Prot/Firm"/>
</dbReference>
<dbReference type="InterPro" id="IPR004679">
    <property type="entry name" value="2-OHcarboxylate_transport"/>
</dbReference>
<dbReference type="NCBIfam" id="TIGR00783">
    <property type="entry name" value="ccs"/>
    <property type="match status" value="1"/>
</dbReference>
<dbReference type="PANTHER" id="PTHR40033:SF1">
    <property type="entry name" value="CITRATE-SODIUM SYMPORTER"/>
    <property type="match status" value="1"/>
</dbReference>
<dbReference type="PANTHER" id="PTHR40033">
    <property type="entry name" value="NA(+)-MALATE SYMPORTER"/>
    <property type="match status" value="1"/>
</dbReference>
<dbReference type="Pfam" id="PF03390">
    <property type="entry name" value="2HCT"/>
    <property type="match status" value="1"/>
</dbReference>
<dbReference type="PIRSF" id="PIRSF005348">
    <property type="entry name" value="YxkH"/>
    <property type="match status" value="1"/>
</dbReference>
<feature type="chain" id="PRO_0000088758" description="Citrate/sodium symporter">
    <location>
        <begin position="1"/>
        <end position="446"/>
    </location>
</feature>
<feature type="transmembrane region" description="Helical" evidence="2">
    <location>
        <begin position="23"/>
        <end position="43"/>
    </location>
</feature>
<feature type="transmembrane region" description="Helical" evidence="2">
    <location>
        <begin position="46"/>
        <end position="66"/>
    </location>
</feature>
<feature type="transmembrane region" description="Helical" evidence="2">
    <location>
        <begin position="79"/>
        <end position="99"/>
    </location>
</feature>
<feature type="transmembrane region" description="Helical" evidence="2">
    <location>
        <begin position="110"/>
        <end position="130"/>
    </location>
</feature>
<feature type="transmembrane region" description="Helical" evidence="2">
    <location>
        <begin position="148"/>
        <end position="168"/>
    </location>
</feature>
<feature type="transmembrane region" description="Helical" evidence="2">
    <location>
        <begin position="213"/>
        <end position="233"/>
    </location>
</feature>
<feature type="transmembrane region" description="Helical" evidence="2">
    <location>
        <begin position="267"/>
        <end position="287"/>
    </location>
</feature>
<feature type="transmembrane region" description="Helical" evidence="2">
    <location>
        <begin position="289"/>
        <end position="309"/>
    </location>
</feature>
<feature type="transmembrane region" description="Helical" evidence="2">
    <location>
        <begin position="335"/>
        <end position="355"/>
    </location>
</feature>
<feature type="transmembrane region" description="Helical" evidence="2">
    <location>
        <begin position="364"/>
        <end position="384"/>
    </location>
</feature>
<feature type="transmembrane region" description="Helical" evidence="2">
    <location>
        <begin position="425"/>
        <end position="445"/>
    </location>
</feature>
<feature type="binding site" evidence="1">
    <location>
        <position position="181"/>
    </location>
    <ligand>
        <name>Na(+)</name>
        <dbReference type="ChEBI" id="CHEBI:29101"/>
    </ligand>
</feature>
<feature type="binding site" evidence="1">
    <location>
        <position position="183"/>
    </location>
    <ligand>
        <name>Na(+)</name>
        <dbReference type="ChEBI" id="CHEBI:29101"/>
    </ligand>
</feature>
<feature type="binding site" evidence="1">
    <location>
        <position position="186"/>
    </location>
    <ligand>
        <name>citrate</name>
        <dbReference type="ChEBI" id="CHEBI:16947"/>
    </ligand>
</feature>
<feature type="binding site" evidence="1">
    <location>
        <position position="187"/>
    </location>
    <ligand>
        <name>citrate</name>
        <dbReference type="ChEBI" id="CHEBI:16947"/>
    </ligand>
</feature>
<feature type="binding site" evidence="1">
    <location>
        <position position="399"/>
    </location>
    <ligand>
        <name>Na(+)</name>
        <dbReference type="ChEBI" id="CHEBI:29101"/>
    </ligand>
</feature>
<feature type="binding site" evidence="1">
    <location>
        <position position="401"/>
    </location>
    <ligand>
        <name>Na(+)</name>
        <dbReference type="ChEBI" id="CHEBI:29101"/>
    </ligand>
</feature>
<feature type="binding site" evidence="1">
    <location>
        <position position="402"/>
    </location>
    <ligand>
        <name>citrate</name>
        <dbReference type="ChEBI" id="CHEBI:16947"/>
    </ligand>
</feature>
<feature type="binding site" evidence="1">
    <location>
        <position position="404"/>
    </location>
    <ligand>
        <name>citrate</name>
        <dbReference type="ChEBI" id="CHEBI:16947"/>
    </ligand>
</feature>
<feature type="binding site" evidence="1">
    <location>
        <position position="405"/>
    </location>
    <ligand>
        <name>citrate</name>
        <dbReference type="ChEBI" id="CHEBI:16947"/>
    </ligand>
</feature>
<feature type="binding site" evidence="1">
    <location>
        <position position="428"/>
    </location>
    <ligand>
        <name>citrate</name>
        <dbReference type="ChEBI" id="CHEBI:16947"/>
    </ligand>
</feature>
<accession>P0A2G0</accession>
<accession>P31604</accession>
<gene>
    <name evidence="1" type="primary">citS</name>
    <name evidence="4" type="synonym">citC</name>
</gene>
<sequence>MTNMTQASATEKKGASDLLRFKIFGMPLPLYAFALITLLLSHFYNAIPTDLVGGFALMFVMGAIFGEIGKRLPIFNKYIGGAPVMIFLVAAYFVYAGIFTQKEIDAISNVMDKSNFLNLFIAVLITGAILSVNRKLLLKSLLGYIPTILAGIVGASLFGIVIGLCFGIPVDRIMMLYVLPIMGGGNGAGAVPLSEIYHSVTGRSREEYYSTAIAILTIANIFAIIFAALLDMIGKKYTWLSGEGELVRKASFKTEDDEKAGQITHRETAVGMVLSTTCFLLAYVVAKKILPSIGGVSIHYFAWMVLIVAALNASGLCSPEIKAGAKRLSDFFSKQLLWVLMVGVGVCYTDLQEIIDALTFANVVIAAIIVVGAVVGAAIGGWLIGFYPIESSITAGLCMANRGGSGDLEVLSACNRMNLISYAQISSRLGGGIVLVIASIVFSMMV</sequence>